<proteinExistence type="inferred from homology"/>
<protein>
    <recommendedName>
        <fullName evidence="1">Small ribosomal subunit protein bS21</fullName>
    </recommendedName>
    <alternativeName>
        <fullName evidence="2">30S ribosomal protein S21</fullName>
    </alternativeName>
</protein>
<comment type="similarity">
    <text evidence="1">Belongs to the bacterial ribosomal protein bS21 family.</text>
</comment>
<accession>B4U8H0</accession>
<keyword id="KW-0687">Ribonucleoprotein</keyword>
<keyword id="KW-0689">Ribosomal protein</keyword>
<gene>
    <name evidence="1" type="primary">rpsU</name>
    <name type="ordered locus">HY04AAS1_0744</name>
</gene>
<reference key="1">
    <citation type="journal article" date="2009" name="J. Bacteriol.">
        <title>Complete and draft genome sequences of six members of the Aquificales.</title>
        <authorList>
            <person name="Reysenbach A.-L."/>
            <person name="Hamamura N."/>
            <person name="Podar M."/>
            <person name="Griffiths E."/>
            <person name="Ferreira S."/>
            <person name="Hochstein R."/>
            <person name="Heidelberg J."/>
            <person name="Johnson J."/>
            <person name="Mead D."/>
            <person name="Pohorille A."/>
            <person name="Sarmiento M."/>
            <person name="Schweighofer K."/>
            <person name="Seshadri R."/>
            <person name="Voytek M.A."/>
        </authorList>
    </citation>
    <scope>NUCLEOTIDE SEQUENCE [LARGE SCALE GENOMIC DNA]</scope>
    <source>
        <strain>Y04AAS1</strain>
    </source>
</reference>
<feature type="chain" id="PRO_1000120630" description="Small ribosomal subunit protein bS21">
    <location>
        <begin position="1"/>
        <end position="67"/>
    </location>
</feature>
<name>RS21_HYDS0</name>
<organism>
    <name type="scientific">Hydrogenobaculum sp. (strain Y04AAS1)</name>
    <dbReference type="NCBI Taxonomy" id="380749"/>
    <lineage>
        <taxon>Bacteria</taxon>
        <taxon>Pseudomonadati</taxon>
        <taxon>Aquificota</taxon>
        <taxon>Aquificia</taxon>
        <taxon>Aquificales</taxon>
        <taxon>Aquificaceae</taxon>
        <taxon>Hydrogenobaculum</taxon>
    </lineage>
</organism>
<dbReference type="EMBL" id="CP001130">
    <property type="protein sequence ID" value="ACG57431.1"/>
    <property type="molecule type" value="Genomic_DNA"/>
</dbReference>
<dbReference type="RefSeq" id="WP_012513787.1">
    <property type="nucleotide sequence ID" value="NC_011126.1"/>
</dbReference>
<dbReference type="SMR" id="B4U8H0"/>
<dbReference type="STRING" id="380749.HY04AAS1_0744"/>
<dbReference type="KEGG" id="hya:HY04AAS1_0744"/>
<dbReference type="eggNOG" id="COG0828">
    <property type="taxonomic scope" value="Bacteria"/>
</dbReference>
<dbReference type="HOGENOM" id="CLU_159258_1_2_0"/>
<dbReference type="OrthoDB" id="9799244at2"/>
<dbReference type="GO" id="GO:1990904">
    <property type="term" value="C:ribonucleoprotein complex"/>
    <property type="evidence" value="ECO:0007669"/>
    <property type="project" value="UniProtKB-KW"/>
</dbReference>
<dbReference type="GO" id="GO:0005840">
    <property type="term" value="C:ribosome"/>
    <property type="evidence" value="ECO:0007669"/>
    <property type="project" value="UniProtKB-KW"/>
</dbReference>
<dbReference type="GO" id="GO:0003735">
    <property type="term" value="F:structural constituent of ribosome"/>
    <property type="evidence" value="ECO:0007669"/>
    <property type="project" value="InterPro"/>
</dbReference>
<dbReference type="GO" id="GO:0006412">
    <property type="term" value="P:translation"/>
    <property type="evidence" value="ECO:0007669"/>
    <property type="project" value="UniProtKB-UniRule"/>
</dbReference>
<dbReference type="Gene3D" id="1.20.5.1150">
    <property type="entry name" value="Ribosomal protein S8"/>
    <property type="match status" value="1"/>
</dbReference>
<dbReference type="HAMAP" id="MF_00358">
    <property type="entry name" value="Ribosomal_bS21"/>
    <property type="match status" value="1"/>
</dbReference>
<dbReference type="InterPro" id="IPR001911">
    <property type="entry name" value="Ribosomal_bS21"/>
</dbReference>
<dbReference type="InterPro" id="IPR038380">
    <property type="entry name" value="Ribosomal_bS21_sf"/>
</dbReference>
<dbReference type="NCBIfam" id="TIGR00030">
    <property type="entry name" value="S21p"/>
    <property type="match status" value="1"/>
</dbReference>
<dbReference type="PANTHER" id="PTHR21109">
    <property type="entry name" value="MITOCHONDRIAL 28S RIBOSOMAL PROTEIN S21"/>
    <property type="match status" value="1"/>
</dbReference>
<dbReference type="PANTHER" id="PTHR21109:SF22">
    <property type="entry name" value="SMALL RIBOSOMAL SUBUNIT PROTEIN BS21"/>
    <property type="match status" value="1"/>
</dbReference>
<dbReference type="Pfam" id="PF01165">
    <property type="entry name" value="Ribosomal_S21"/>
    <property type="match status" value="1"/>
</dbReference>
<dbReference type="PRINTS" id="PR00976">
    <property type="entry name" value="RIBOSOMALS21"/>
</dbReference>
<sequence>MATVIVGDSESFEKAMKRFKKVVEREGILSELKRREFYEKPSQKKKRKERAARKRLLKAMKKKRVAL</sequence>
<evidence type="ECO:0000255" key="1">
    <source>
        <dbReference type="HAMAP-Rule" id="MF_00358"/>
    </source>
</evidence>
<evidence type="ECO:0000305" key="2"/>